<sequence length="105" mass="11990">MFAVIKAGGKQYKVDRNSIIKVEKIDGELGSKIQFDQVLMIGEYSKPSFIGTPIVKGAVVTAEITNQLKDNKIIVFKKKRRKNYRRKAGHRQELTELKILDITKQ</sequence>
<keyword id="KW-0687">Ribonucleoprotein</keyword>
<keyword id="KW-0689">Ribosomal protein</keyword>
<keyword id="KW-0694">RNA-binding</keyword>
<keyword id="KW-0699">rRNA-binding</keyword>
<dbReference type="EMBL" id="CP001227">
    <property type="protein sequence ID" value="ACR47418.1"/>
    <property type="molecule type" value="Genomic_DNA"/>
</dbReference>
<dbReference type="RefSeq" id="WP_012736665.1">
    <property type="nucleotide sequence ID" value="NC_012730.1"/>
</dbReference>
<dbReference type="SMR" id="C4K1G7"/>
<dbReference type="KEGG" id="rpk:RPR_03185"/>
<dbReference type="HOGENOM" id="CLU_061463_3_2_5"/>
<dbReference type="Proteomes" id="UP000005015">
    <property type="component" value="Chromosome"/>
</dbReference>
<dbReference type="GO" id="GO:0005737">
    <property type="term" value="C:cytoplasm"/>
    <property type="evidence" value="ECO:0007669"/>
    <property type="project" value="UniProtKB-ARBA"/>
</dbReference>
<dbReference type="GO" id="GO:1990904">
    <property type="term" value="C:ribonucleoprotein complex"/>
    <property type="evidence" value="ECO:0007669"/>
    <property type="project" value="UniProtKB-KW"/>
</dbReference>
<dbReference type="GO" id="GO:0005840">
    <property type="term" value="C:ribosome"/>
    <property type="evidence" value="ECO:0007669"/>
    <property type="project" value="UniProtKB-KW"/>
</dbReference>
<dbReference type="GO" id="GO:0019843">
    <property type="term" value="F:rRNA binding"/>
    <property type="evidence" value="ECO:0007669"/>
    <property type="project" value="UniProtKB-UniRule"/>
</dbReference>
<dbReference type="GO" id="GO:0003735">
    <property type="term" value="F:structural constituent of ribosome"/>
    <property type="evidence" value="ECO:0007669"/>
    <property type="project" value="InterPro"/>
</dbReference>
<dbReference type="GO" id="GO:0006412">
    <property type="term" value="P:translation"/>
    <property type="evidence" value="ECO:0007669"/>
    <property type="project" value="UniProtKB-UniRule"/>
</dbReference>
<dbReference type="HAMAP" id="MF_01363">
    <property type="entry name" value="Ribosomal_bL21"/>
    <property type="match status" value="1"/>
</dbReference>
<dbReference type="InterPro" id="IPR028909">
    <property type="entry name" value="bL21-like"/>
</dbReference>
<dbReference type="InterPro" id="IPR036164">
    <property type="entry name" value="bL21-like_sf"/>
</dbReference>
<dbReference type="InterPro" id="IPR001787">
    <property type="entry name" value="Ribosomal_bL21"/>
</dbReference>
<dbReference type="InterPro" id="IPR018258">
    <property type="entry name" value="Ribosomal_bL21_CS"/>
</dbReference>
<dbReference type="NCBIfam" id="TIGR00061">
    <property type="entry name" value="L21"/>
    <property type="match status" value="1"/>
</dbReference>
<dbReference type="PANTHER" id="PTHR21349">
    <property type="entry name" value="50S RIBOSOMAL PROTEIN L21"/>
    <property type="match status" value="1"/>
</dbReference>
<dbReference type="PANTHER" id="PTHR21349:SF0">
    <property type="entry name" value="LARGE RIBOSOMAL SUBUNIT PROTEIN BL21M"/>
    <property type="match status" value="1"/>
</dbReference>
<dbReference type="Pfam" id="PF00829">
    <property type="entry name" value="Ribosomal_L21p"/>
    <property type="match status" value="1"/>
</dbReference>
<dbReference type="SUPFAM" id="SSF141091">
    <property type="entry name" value="L21p-like"/>
    <property type="match status" value="1"/>
</dbReference>
<dbReference type="PROSITE" id="PS01169">
    <property type="entry name" value="RIBOSOMAL_L21"/>
    <property type="match status" value="1"/>
</dbReference>
<accession>C4K1G7</accession>
<evidence type="ECO:0000255" key="1">
    <source>
        <dbReference type="HAMAP-Rule" id="MF_01363"/>
    </source>
</evidence>
<evidence type="ECO:0000305" key="2"/>
<gene>
    <name evidence="1" type="primary">rplU</name>
    <name type="ordered locus">RPR_03185</name>
</gene>
<protein>
    <recommendedName>
        <fullName evidence="1">Large ribosomal subunit protein bL21</fullName>
    </recommendedName>
    <alternativeName>
        <fullName evidence="2">50S ribosomal protein L21</fullName>
    </alternativeName>
</protein>
<reference key="1">
    <citation type="journal article" date="2009" name="PLoS ONE">
        <title>Genome sequence of the endosymbiont Rickettsia peacockii and comparison with virulent Rickettsia rickettsii: identification of virulence factors.</title>
        <authorList>
            <person name="Felsheim R.F."/>
            <person name="Kurtti T.J."/>
            <person name="Munderloh U.G."/>
        </authorList>
    </citation>
    <scope>NUCLEOTIDE SEQUENCE [LARGE SCALE GENOMIC DNA]</scope>
    <source>
        <strain>Rustic</strain>
    </source>
</reference>
<feature type="chain" id="PRO_1000214901" description="Large ribosomal subunit protein bL21">
    <location>
        <begin position="1"/>
        <end position="105"/>
    </location>
</feature>
<name>RL21_RICPU</name>
<organism>
    <name type="scientific">Rickettsia peacockii (strain Rustic)</name>
    <dbReference type="NCBI Taxonomy" id="562019"/>
    <lineage>
        <taxon>Bacteria</taxon>
        <taxon>Pseudomonadati</taxon>
        <taxon>Pseudomonadota</taxon>
        <taxon>Alphaproteobacteria</taxon>
        <taxon>Rickettsiales</taxon>
        <taxon>Rickettsiaceae</taxon>
        <taxon>Rickettsieae</taxon>
        <taxon>Rickettsia</taxon>
        <taxon>spotted fever group</taxon>
    </lineage>
</organism>
<comment type="function">
    <text evidence="1">This protein binds to 23S rRNA in the presence of protein L20.</text>
</comment>
<comment type="subunit">
    <text evidence="1">Part of the 50S ribosomal subunit. Contacts protein L20.</text>
</comment>
<comment type="similarity">
    <text evidence="1">Belongs to the bacterial ribosomal protein bL21 family.</text>
</comment>
<proteinExistence type="inferred from homology"/>